<organism>
    <name type="scientific">Methanocaldococcus jannaschii (strain ATCC 43067 / DSM 2661 / JAL-1 / JCM 10045 / NBRC 100440)</name>
    <name type="common">Methanococcus jannaschii</name>
    <dbReference type="NCBI Taxonomy" id="243232"/>
    <lineage>
        <taxon>Archaea</taxon>
        <taxon>Methanobacteriati</taxon>
        <taxon>Methanobacteriota</taxon>
        <taxon>Methanomada group</taxon>
        <taxon>Methanococci</taxon>
        <taxon>Methanococcales</taxon>
        <taxon>Methanocaldococcaceae</taxon>
        <taxon>Methanocaldococcus</taxon>
    </lineage>
</organism>
<feature type="chain" id="PRO_0000107228" description="Uncharacterized protein MJ1232">
    <location>
        <begin position="1"/>
        <end position="296"/>
    </location>
</feature>
<feature type="domain" description="CBS 1" evidence="1">
    <location>
        <begin position="176"/>
        <end position="232"/>
    </location>
</feature>
<feature type="domain" description="CBS 2" evidence="1">
    <location>
        <begin position="236"/>
        <end position="292"/>
    </location>
</feature>
<reference key="1">
    <citation type="journal article" date="1996" name="Science">
        <title>Complete genome sequence of the methanogenic archaeon, Methanococcus jannaschii.</title>
        <authorList>
            <person name="Bult C.J."/>
            <person name="White O."/>
            <person name="Olsen G.J."/>
            <person name="Zhou L."/>
            <person name="Fleischmann R.D."/>
            <person name="Sutton G.G."/>
            <person name="Blake J.A."/>
            <person name="FitzGerald L.M."/>
            <person name="Clayton R.A."/>
            <person name="Gocayne J.D."/>
            <person name="Kerlavage A.R."/>
            <person name="Dougherty B.A."/>
            <person name="Tomb J.-F."/>
            <person name="Adams M.D."/>
            <person name="Reich C.I."/>
            <person name="Overbeek R."/>
            <person name="Kirkness E.F."/>
            <person name="Weinstock K.G."/>
            <person name="Merrick J.M."/>
            <person name="Glodek A."/>
            <person name="Scott J.L."/>
            <person name="Geoghagen N.S.M."/>
            <person name="Weidman J.F."/>
            <person name="Fuhrmann J.L."/>
            <person name="Nguyen D."/>
            <person name="Utterback T.R."/>
            <person name="Kelley J.M."/>
            <person name="Peterson J.D."/>
            <person name="Sadow P.W."/>
            <person name="Hanna M.C."/>
            <person name="Cotton M.D."/>
            <person name="Roberts K.M."/>
            <person name="Hurst M.A."/>
            <person name="Kaine B.P."/>
            <person name="Borodovsky M."/>
            <person name="Klenk H.-P."/>
            <person name="Fraser C.M."/>
            <person name="Smith H.O."/>
            <person name="Woese C.R."/>
            <person name="Venter J.C."/>
        </authorList>
    </citation>
    <scope>NUCLEOTIDE SEQUENCE [LARGE SCALE GENOMIC DNA]</scope>
    <source>
        <strain>ATCC 43067 / DSM 2661 / JAL-1 / JCM 10045 / NBRC 100440</strain>
    </source>
</reference>
<sequence>MELTVVQREILQELINLYREKNRPIKGTEIALRLNRNPGTIRNQMQALRALDLVDGVPGPKGGYVPTSKAYRALGLEDEGEIIVPIYKDGKKVEGVKVVKIEFDTVSHEKCCSSKIHIEGDTKHFNIGDIIRVGPTYHNKIIINGKIIGRDDIHRILLIDVLGVSSIPNIKVGDVGIKEVWTINPNCTLRETAKLFAEKYISGAPVVDNDKLVGVISLHDIAENIDNIDKKVKEVMRRDVITIHKDEKIYDALKIMNKNNVGRLVIVDDNNKIVGIITRTDILKIISGKFPENFHT</sequence>
<name>Y1232_METJA</name>
<keyword id="KW-0129">CBS domain</keyword>
<keyword id="KW-1185">Reference proteome</keyword>
<keyword id="KW-0677">Repeat</keyword>
<accession>Q58629</accession>
<gene>
    <name type="ordered locus">MJ1232</name>
</gene>
<evidence type="ECO:0000255" key="1">
    <source>
        <dbReference type="PROSITE-ProRule" id="PRU00703"/>
    </source>
</evidence>
<dbReference type="EMBL" id="L77117">
    <property type="protein sequence ID" value="AAB99237.1"/>
    <property type="molecule type" value="Genomic_DNA"/>
</dbReference>
<dbReference type="PIR" id="G64453">
    <property type="entry name" value="G64453"/>
</dbReference>
<dbReference type="RefSeq" id="WP_010870744.1">
    <property type="nucleotide sequence ID" value="NC_000909.1"/>
</dbReference>
<dbReference type="SMR" id="Q58629"/>
<dbReference type="STRING" id="243232.MJ_1232"/>
<dbReference type="PaxDb" id="243232-MJ_1232"/>
<dbReference type="EnsemblBacteria" id="AAB99237">
    <property type="protein sequence ID" value="AAB99237"/>
    <property type="gene ID" value="MJ_1232"/>
</dbReference>
<dbReference type="GeneID" id="1452128"/>
<dbReference type="KEGG" id="mja:MJ_1232"/>
<dbReference type="eggNOG" id="arCOG00610">
    <property type="taxonomic scope" value="Archaea"/>
</dbReference>
<dbReference type="HOGENOM" id="CLU_926289_0_0_2"/>
<dbReference type="InParanoid" id="Q58629"/>
<dbReference type="OrthoDB" id="64432at2157"/>
<dbReference type="PhylomeDB" id="Q58629"/>
<dbReference type="Proteomes" id="UP000000805">
    <property type="component" value="Chromosome"/>
</dbReference>
<dbReference type="GO" id="GO:0003677">
    <property type="term" value="F:DNA binding"/>
    <property type="evidence" value="ECO:0007669"/>
    <property type="project" value="InterPro"/>
</dbReference>
<dbReference type="GO" id="GO:0006355">
    <property type="term" value="P:regulation of DNA-templated transcription"/>
    <property type="evidence" value="ECO:0007669"/>
    <property type="project" value="InterPro"/>
</dbReference>
<dbReference type="CDD" id="cd04588">
    <property type="entry name" value="CBS_pair_archHTH_assoc"/>
    <property type="match status" value="1"/>
</dbReference>
<dbReference type="Gene3D" id="3.10.580.10">
    <property type="entry name" value="CBS-domain"/>
    <property type="match status" value="1"/>
</dbReference>
<dbReference type="Gene3D" id="1.10.10.10">
    <property type="entry name" value="Winged helix-like DNA-binding domain superfamily/Winged helix DNA-binding domain"/>
    <property type="match status" value="1"/>
</dbReference>
<dbReference type="InterPro" id="IPR000644">
    <property type="entry name" value="CBS_dom"/>
</dbReference>
<dbReference type="InterPro" id="IPR046342">
    <property type="entry name" value="CBS_dom_sf"/>
</dbReference>
<dbReference type="InterPro" id="IPR051257">
    <property type="entry name" value="Diverse_CBS-Domain"/>
</dbReference>
<dbReference type="InterPro" id="IPR016436">
    <property type="entry name" value="UCP005063_CBS"/>
</dbReference>
<dbReference type="InterPro" id="IPR036388">
    <property type="entry name" value="WH-like_DNA-bd_sf"/>
</dbReference>
<dbReference type="InterPro" id="IPR036390">
    <property type="entry name" value="WH_DNA-bd_sf"/>
</dbReference>
<dbReference type="InterPro" id="IPR005104">
    <property type="entry name" value="WHTH_HrcA_DNA-bd"/>
</dbReference>
<dbReference type="PANTHER" id="PTHR43080:SF2">
    <property type="entry name" value="CBS DOMAIN-CONTAINING PROTEIN"/>
    <property type="match status" value="1"/>
</dbReference>
<dbReference type="PANTHER" id="PTHR43080">
    <property type="entry name" value="CBS DOMAIN-CONTAINING PROTEIN CBSX3, MITOCHONDRIAL"/>
    <property type="match status" value="1"/>
</dbReference>
<dbReference type="Pfam" id="PF00571">
    <property type="entry name" value="CBS"/>
    <property type="match status" value="2"/>
</dbReference>
<dbReference type="Pfam" id="PF03444">
    <property type="entry name" value="HrcA_DNA-bdg"/>
    <property type="match status" value="1"/>
</dbReference>
<dbReference type="PIRSF" id="PIRSF005063">
    <property type="entry name" value="UCP005063_CBS_MJ1232"/>
    <property type="match status" value="1"/>
</dbReference>
<dbReference type="SMART" id="SM00116">
    <property type="entry name" value="CBS"/>
    <property type="match status" value="2"/>
</dbReference>
<dbReference type="SUPFAM" id="SSF54631">
    <property type="entry name" value="CBS-domain pair"/>
    <property type="match status" value="1"/>
</dbReference>
<dbReference type="SUPFAM" id="SSF46785">
    <property type="entry name" value="Winged helix' DNA-binding domain"/>
    <property type="match status" value="1"/>
</dbReference>
<dbReference type="PROSITE" id="PS51371">
    <property type="entry name" value="CBS"/>
    <property type="match status" value="2"/>
</dbReference>
<proteinExistence type="predicted"/>
<protein>
    <recommendedName>
        <fullName>Uncharacterized protein MJ1232</fullName>
    </recommendedName>
</protein>